<evidence type="ECO:0000255" key="1">
    <source>
        <dbReference type="HAMAP-Rule" id="MF_00003"/>
    </source>
</evidence>
<gene>
    <name evidence="1" type="primary">rbfA</name>
    <name type="ordered locus">sce5796</name>
</gene>
<organism>
    <name type="scientific">Sorangium cellulosum (strain So ce56)</name>
    <name type="common">Polyangium cellulosum (strain So ce56)</name>
    <dbReference type="NCBI Taxonomy" id="448385"/>
    <lineage>
        <taxon>Bacteria</taxon>
        <taxon>Pseudomonadati</taxon>
        <taxon>Myxococcota</taxon>
        <taxon>Polyangia</taxon>
        <taxon>Polyangiales</taxon>
        <taxon>Polyangiaceae</taxon>
        <taxon>Sorangium</taxon>
    </lineage>
</organism>
<dbReference type="EMBL" id="AM746676">
    <property type="protein sequence ID" value="CAN95959.1"/>
    <property type="molecule type" value="Genomic_DNA"/>
</dbReference>
<dbReference type="RefSeq" id="WP_012238424.1">
    <property type="nucleotide sequence ID" value="NC_010162.1"/>
</dbReference>
<dbReference type="SMR" id="A9G882"/>
<dbReference type="STRING" id="448385.sce5796"/>
<dbReference type="KEGG" id="scl:sce5796"/>
<dbReference type="eggNOG" id="COG0858">
    <property type="taxonomic scope" value="Bacteria"/>
</dbReference>
<dbReference type="HOGENOM" id="CLU_089475_6_3_7"/>
<dbReference type="OrthoDB" id="307788at2"/>
<dbReference type="BioCyc" id="SCEL448385:SCE_RS29785-MONOMER"/>
<dbReference type="Proteomes" id="UP000002139">
    <property type="component" value="Chromosome"/>
</dbReference>
<dbReference type="GO" id="GO:0005829">
    <property type="term" value="C:cytosol"/>
    <property type="evidence" value="ECO:0007669"/>
    <property type="project" value="TreeGrafter"/>
</dbReference>
<dbReference type="GO" id="GO:0043024">
    <property type="term" value="F:ribosomal small subunit binding"/>
    <property type="evidence" value="ECO:0007669"/>
    <property type="project" value="TreeGrafter"/>
</dbReference>
<dbReference type="GO" id="GO:0030490">
    <property type="term" value="P:maturation of SSU-rRNA"/>
    <property type="evidence" value="ECO:0007669"/>
    <property type="project" value="UniProtKB-UniRule"/>
</dbReference>
<dbReference type="Gene3D" id="3.30.300.20">
    <property type="match status" value="1"/>
</dbReference>
<dbReference type="HAMAP" id="MF_00003">
    <property type="entry name" value="RbfA"/>
    <property type="match status" value="1"/>
</dbReference>
<dbReference type="InterPro" id="IPR015946">
    <property type="entry name" value="KH_dom-like_a/b"/>
</dbReference>
<dbReference type="InterPro" id="IPR000238">
    <property type="entry name" value="RbfA"/>
</dbReference>
<dbReference type="InterPro" id="IPR023799">
    <property type="entry name" value="RbfA_dom_sf"/>
</dbReference>
<dbReference type="InterPro" id="IPR020053">
    <property type="entry name" value="Ribosome-bd_factorA_CS"/>
</dbReference>
<dbReference type="NCBIfam" id="TIGR00082">
    <property type="entry name" value="rbfA"/>
    <property type="match status" value="1"/>
</dbReference>
<dbReference type="PANTHER" id="PTHR33515">
    <property type="entry name" value="RIBOSOME-BINDING FACTOR A, CHLOROPLASTIC-RELATED"/>
    <property type="match status" value="1"/>
</dbReference>
<dbReference type="PANTHER" id="PTHR33515:SF1">
    <property type="entry name" value="RIBOSOME-BINDING FACTOR A, CHLOROPLASTIC-RELATED"/>
    <property type="match status" value="1"/>
</dbReference>
<dbReference type="Pfam" id="PF02033">
    <property type="entry name" value="RBFA"/>
    <property type="match status" value="1"/>
</dbReference>
<dbReference type="SUPFAM" id="SSF89919">
    <property type="entry name" value="Ribosome-binding factor A, RbfA"/>
    <property type="match status" value="1"/>
</dbReference>
<dbReference type="PROSITE" id="PS01319">
    <property type="entry name" value="RBFA"/>
    <property type="match status" value="1"/>
</dbReference>
<feature type="chain" id="PRO_0000329333" description="Ribosome-binding factor A">
    <location>
        <begin position="1"/>
        <end position="124"/>
    </location>
</feature>
<reference key="1">
    <citation type="journal article" date="2007" name="Nat. Biotechnol.">
        <title>Complete genome sequence of the myxobacterium Sorangium cellulosum.</title>
        <authorList>
            <person name="Schneiker S."/>
            <person name="Perlova O."/>
            <person name="Kaiser O."/>
            <person name="Gerth K."/>
            <person name="Alici A."/>
            <person name="Altmeyer M.O."/>
            <person name="Bartels D."/>
            <person name="Bekel T."/>
            <person name="Beyer S."/>
            <person name="Bode E."/>
            <person name="Bode H.B."/>
            <person name="Bolten C.J."/>
            <person name="Choudhuri J.V."/>
            <person name="Doss S."/>
            <person name="Elnakady Y.A."/>
            <person name="Frank B."/>
            <person name="Gaigalat L."/>
            <person name="Goesmann A."/>
            <person name="Groeger C."/>
            <person name="Gross F."/>
            <person name="Jelsbak L."/>
            <person name="Jelsbak L."/>
            <person name="Kalinowski J."/>
            <person name="Kegler C."/>
            <person name="Knauber T."/>
            <person name="Konietzny S."/>
            <person name="Kopp M."/>
            <person name="Krause L."/>
            <person name="Krug D."/>
            <person name="Linke B."/>
            <person name="Mahmud T."/>
            <person name="Martinez-Arias R."/>
            <person name="McHardy A.C."/>
            <person name="Merai M."/>
            <person name="Meyer F."/>
            <person name="Mormann S."/>
            <person name="Munoz-Dorado J."/>
            <person name="Perez J."/>
            <person name="Pradella S."/>
            <person name="Rachid S."/>
            <person name="Raddatz G."/>
            <person name="Rosenau F."/>
            <person name="Rueckert C."/>
            <person name="Sasse F."/>
            <person name="Scharfe M."/>
            <person name="Schuster S.C."/>
            <person name="Suen G."/>
            <person name="Treuner-Lange A."/>
            <person name="Velicer G.J."/>
            <person name="Vorholter F.-J."/>
            <person name="Weissman K.J."/>
            <person name="Welch R.D."/>
            <person name="Wenzel S.C."/>
            <person name="Whitworth D.E."/>
            <person name="Wilhelm S."/>
            <person name="Wittmann C."/>
            <person name="Bloecker H."/>
            <person name="Puehler A."/>
            <person name="Mueller R."/>
        </authorList>
    </citation>
    <scope>NUCLEOTIDE SEQUENCE [LARGE SCALE GENOMIC DNA]</scope>
    <source>
        <strain>So ce56</strain>
    </source>
</reference>
<protein>
    <recommendedName>
        <fullName evidence="1">Ribosome-binding factor A</fullName>
    </recommendedName>
</protein>
<keyword id="KW-0963">Cytoplasm</keyword>
<keyword id="KW-1185">Reference proteome</keyword>
<keyword id="KW-0690">Ribosome biogenesis</keyword>
<accession>A9G882</accession>
<name>RBFA_SORC5</name>
<proteinExistence type="inferred from homology"/>
<sequence length="124" mass="13965">MSGVVKRATRVAERLREDLSNLLRDLRDPRIAGVLVSRVEITDDLQSAKVHVRHEFGAEDAAARRALLKGLEAASGRLRRDVARTMGLRVVPTLRFFYDEGPDAERRIEELLREIKDGSSGERS</sequence>
<comment type="function">
    <text evidence="1">One of several proteins that assist in the late maturation steps of the functional core of the 30S ribosomal subunit. Associates with free 30S ribosomal subunits (but not with 30S subunits that are part of 70S ribosomes or polysomes). Required for efficient processing of 16S rRNA. May interact with the 5'-terminal helix region of 16S rRNA.</text>
</comment>
<comment type="subunit">
    <text evidence="1">Monomer. Binds 30S ribosomal subunits, but not 50S ribosomal subunits or 70S ribosomes.</text>
</comment>
<comment type="subcellular location">
    <subcellularLocation>
        <location evidence="1">Cytoplasm</location>
    </subcellularLocation>
</comment>
<comment type="similarity">
    <text evidence="1">Belongs to the RbfA family.</text>
</comment>